<evidence type="ECO:0000255" key="1">
    <source>
        <dbReference type="HAMAP-Rule" id="MF_00444"/>
    </source>
</evidence>
<evidence type="ECO:0007829" key="2">
    <source>
        <dbReference type="PDB" id="1Y7O"/>
    </source>
</evidence>
<keyword id="KW-0002">3D-structure</keyword>
<keyword id="KW-0963">Cytoplasm</keyword>
<keyword id="KW-0378">Hydrolase</keyword>
<keyword id="KW-0645">Protease</keyword>
<keyword id="KW-1185">Reference proteome</keyword>
<keyword id="KW-0720">Serine protease</keyword>
<protein>
    <recommendedName>
        <fullName evidence="1">ATP-dependent Clp protease proteolytic subunit</fullName>
        <ecNumber evidence="1">3.4.21.92</ecNumber>
    </recommendedName>
    <alternativeName>
        <fullName evidence="1">Endopeptidase Clp</fullName>
    </alternativeName>
</protein>
<feature type="chain" id="PRO_0000179671" description="ATP-dependent Clp protease proteolytic subunit">
    <location>
        <begin position="1"/>
        <end position="196"/>
    </location>
</feature>
<feature type="active site" description="Nucleophile" evidence="1">
    <location>
        <position position="96"/>
    </location>
</feature>
<feature type="active site" evidence="1">
    <location>
        <position position="121"/>
    </location>
</feature>
<feature type="helix" evidence="2">
    <location>
        <begin position="18"/>
        <end position="24"/>
    </location>
</feature>
<feature type="strand" evidence="2">
    <location>
        <begin position="27"/>
        <end position="32"/>
    </location>
</feature>
<feature type="helix" evidence="2">
    <location>
        <begin position="36"/>
        <end position="52"/>
    </location>
</feature>
<feature type="strand" evidence="2">
    <location>
        <begin position="58"/>
        <end position="64"/>
    </location>
</feature>
<feature type="helix" evidence="2">
    <location>
        <begin position="69"/>
        <end position="81"/>
    </location>
</feature>
<feature type="strand" evidence="2">
    <location>
        <begin position="82"/>
        <end position="84"/>
    </location>
</feature>
<feature type="strand" evidence="2">
    <location>
        <begin position="86"/>
        <end position="95"/>
    </location>
</feature>
<feature type="helix" evidence="2">
    <location>
        <begin position="97"/>
        <end position="102"/>
    </location>
</feature>
<feature type="strand" evidence="2">
    <location>
        <begin position="110"/>
        <end position="112"/>
    </location>
</feature>
<feature type="strand" evidence="2">
    <location>
        <begin position="117"/>
        <end position="119"/>
    </location>
</feature>
<feature type="helix" evidence="2">
    <location>
        <begin position="140"/>
        <end position="158"/>
    </location>
</feature>
<feature type="helix" evidence="2">
    <location>
        <begin position="162"/>
        <end position="170"/>
    </location>
</feature>
<feature type="helix" evidence="2">
    <location>
        <begin position="177"/>
        <end position="183"/>
    </location>
</feature>
<feature type="strand" evidence="2">
    <location>
        <begin position="187"/>
        <end position="189"/>
    </location>
</feature>
<name>CLPP_STRR6</name>
<dbReference type="EC" id="3.4.21.92" evidence="1"/>
<dbReference type="EMBL" id="AE007317">
    <property type="protein sequence ID" value="AAK99460.1"/>
    <property type="molecule type" value="Genomic_DNA"/>
</dbReference>
<dbReference type="PIR" id="H97953">
    <property type="entry name" value="H97953"/>
</dbReference>
<dbReference type="RefSeq" id="NP_358250.1">
    <property type="nucleotide sequence ID" value="NC_003098.1"/>
</dbReference>
<dbReference type="RefSeq" id="WP_000613477.1">
    <property type="nucleotide sequence ID" value="NC_003098.1"/>
</dbReference>
<dbReference type="PDB" id="1Y7O">
    <property type="method" value="X-ray"/>
    <property type="resolution" value="2.51 A"/>
    <property type="chains" value="A/B/C/D/E/F/G=1-196"/>
</dbReference>
<dbReference type="PDBsum" id="1Y7O"/>
<dbReference type="SMR" id="P63788"/>
<dbReference type="STRING" id="171101.spr0656"/>
<dbReference type="MEROPS" id="S14.001"/>
<dbReference type="KEGG" id="spr:spr0656"/>
<dbReference type="PATRIC" id="fig|171101.6.peg.728"/>
<dbReference type="eggNOG" id="COG0740">
    <property type="taxonomic scope" value="Bacteria"/>
</dbReference>
<dbReference type="HOGENOM" id="CLU_058707_3_2_9"/>
<dbReference type="EvolutionaryTrace" id="P63788"/>
<dbReference type="Proteomes" id="UP000000586">
    <property type="component" value="Chromosome"/>
</dbReference>
<dbReference type="GO" id="GO:0005737">
    <property type="term" value="C:cytoplasm"/>
    <property type="evidence" value="ECO:0007669"/>
    <property type="project" value="UniProtKB-SubCell"/>
</dbReference>
<dbReference type="GO" id="GO:0009368">
    <property type="term" value="C:endopeptidase Clp complex"/>
    <property type="evidence" value="ECO:0000318"/>
    <property type="project" value="GO_Central"/>
</dbReference>
<dbReference type="GO" id="GO:0004176">
    <property type="term" value="F:ATP-dependent peptidase activity"/>
    <property type="evidence" value="ECO:0000318"/>
    <property type="project" value="GO_Central"/>
</dbReference>
<dbReference type="GO" id="GO:0051117">
    <property type="term" value="F:ATPase binding"/>
    <property type="evidence" value="ECO:0000318"/>
    <property type="project" value="GO_Central"/>
</dbReference>
<dbReference type="GO" id="GO:0004252">
    <property type="term" value="F:serine-type endopeptidase activity"/>
    <property type="evidence" value="ECO:0000318"/>
    <property type="project" value="GO_Central"/>
</dbReference>
<dbReference type="GO" id="GO:0006515">
    <property type="term" value="P:protein quality control for misfolded or incompletely synthesized proteins"/>
    <property type="evidence" value="ECO:0000318"/>
    <property type="project" value="GO_Central"/>
</dbReference>
<dbReference type="CDD" id="cd07017">
    <property type="entry name" value="S14_ClpP_2"/>
    <property type="match status" value="1"/>
</dbReference>
<dbReference type="FunFam" id="3.90.226.10:FF:000014">
    <property type="entry name" value="ATP-dependent Clp protease proteolytic subunit"/>
    <property type="match status" value="1"/>
</dbReference>
<dbReference type="Gene3D" id="3.90.226.10">
    <property type="entry name" value="2-enoyl-CoA Hydratase, Chain A, domain 1"/>
    <property type="match status" value="1"/>
</dbReference>
<dbReference type="HAMAP" id="MF_00444">
    <property type="entry name" value="ClpP"/>
    <property type="match status" value="1"/>
</dbReference>
<dbReference type="InterPro" id="IPR001907">
    <property type="entry name" value="ClpP"/>
</dbReference>
<dbReference type="InterPro" id="IPR029045">
    <property type="entry name" value="ClpP/crotonase-like_dom_sf"/>
</dbReference>
<dbReference type="InterPro" id="IPR023562">
    <property type="entry name" value="ClpP/TepA"/>
</dbReference>
<dbReference type="InterPro" id="IPR033135">
    <property type="entry name" value="ClpP_His_AS"/>
</dbReference>
<dbReference type="InterPro" id="IPR018215">
    <property type="entry name" value="ClpP_Ser_AS"/>
</dbReference>
<dbReference type="NCBIfam" id="NF001368">
    <property type="entry name" value="PRK00277.1"/>
    <property type="match status" value="1"/>
</dbReference>
<dbReference type="NCBIfam" id="NF009205">
    <property type="entry name" value="PRK12553.1"/>
    <property type="match status" value="1"/>
</dbReference>
<dbReference type="PANTHER" id="PTHR10381">
    <property type="entry name" value="ATP-DEPENDENT CLP PROTEASE PROTEOLYTIC SUBUNIT"/>
    <property type="match status" value="1"/>
</dbReference>
<dbReference type="PANTHER" id="PTHR10381:SF70">
    <property type="entry name" value="ATP-DEPENDENT CLP PROTEASE PROTEOLYTIC SUBUNIT"/>
    <property type="match status" value="1"/>
</dbReference>
<dbReference type="Pfam" id="PF00574">
    <property type="entry name" value="CLP_protease"/>
    <property type="match status" value="1"/>
</dbReference>
<dbReference type="PRINTS" id="PR00127">
    <property type="entry name" value="CLPPROTEASEP"/>
</dbReference>
<dbReference type="SUPFAM" id="SSF52096">
    <property type="entry name" value="ClpP/crotonase"/>
    <property type="match status" value="1"/>
</dbReference>
<dbReference type="PROSITE" id="PS00382">
    <property type="entry name" value="CLP_PROTEASE_HIS"/>
    <property type="match status" value="1"/>
</dbReference>
<dbReference type="PROSITE" id="PS00381">
    <property type="entry name" value="CLP_PROTEASE_SER"/>
    <property type="match status" value="1"/>
</dbReference>
<reference key="1">
    <citation type="journal article" date="2001" name="J. Bacteriol.">
        <title>Genome of the bacterium Streptococcus pneumoniae strain R6.</title>
        <authorList>
            <person name="Hoskins J."/>
            <person name="Alborn W.E. Jr."/>
            <person name="Arnold J."/>
            <person name="Blaszczak L.C."/>
            <person name="Burgett S."/>
            <person name="DeHoff B.S."/>
            <person name="Estrem S.T."/>
            <person name="Fritz L."/>
            <person name="Fu D.-J."/>
            <person name="Fuller W."/>
            <person name="Geringer C."/>
            <person name="Gilmour R."/>
            <person name="Glass J.S."/>
            <person name="Khoja H."/>
            <person name="Kraft A.R."/>
            <person name="Lagace R.E."/>
            <person name="LeBlanc D.J."/>
            <person name="Lee L.N."/>
            <person name="Lefkowitz E.J."/>
            <person name="Lu J."/>
            <person name="Matsushima P."/>
            <person name="McAhren S.M."/>
            <person name="McHenney M."/>
            <person name="McLeaster K."/>
            <person name="Mundy C.W."/>
            <person name="Nicas T.I."/>
            <person name="Norris F.H."/>
            <person name="O'Gara M."/>
            <person name="Peery R.B."/>
            <person name="Robertson G.T."/>
            <person name="Rockey P."/>
            <person name="Sun P.-M."/>
            <person name="Winkler M.E."/>
            <person name="Yang Y."/>
            <person name="Young-Bellido M."/>
            <person name="Zhao G."/>
            <person name="Zook C.A."/>
            <person name="Baltz R.H."/>
            <person name="Jaskunas S.R."/>
            <person name="Rosteck P.R. Jr."/>
            <person name="Skatrud P.L."/>
            <person name="Glass J.I."/>
        </authorList>
    </citation>
    <scope>NUCLEOTIDE SEQUENCE [LARGE SCALE GENOMIC DNA]</scope>
    <source>
        <strain>ATCC BAA-255 / R6</strain>
    </source>
</reference>
<proteinExistence type="evidence at protein level"/>
<comment type="function">
    <text evidence="1">Cleaves peptides in various proteins in a process that requires ATP hydrolysis. Has a chymotrypsin-like activity. Plays a major role in the degradation of misfolded proteins.</text>
</comment>
<comment type="catalytic activity">
    <reaction evidence="1">
        <text>Hydrolysis of proteins to small peptides in the presence of ATP and magnesium. alpha-casein is the usual test substrate. In the absence of ATP, only oligopeptides shorter than five residues are hydrolyzed (such as succinyl-Leu-Tyr-|-NHMec, and Leu-Tyr-Leu-|-Tyr-Trp, in which cleavage of the -Tyr-|-Leu- and -Tyr-|-Trp bonds also occurs).</text>
        <dbReference type="EC" id="3.4.21.92"/>
    </reaction>
</comment>
<comment type="subunit">
    <text evidence="1">Fourteen ClpP subunits assemble into 2 heptameric rings which stack back to back to give a disk-like structure with a central cavity, resembling the structure of eukaryotic proteasomes.</text>
</comment>
<comment type="subcellular location">
    <subcellularLocation>
        <location evidence="1">Cytoplasm</location>
    </subcellularLocation>
</comment>
<comment type="similarity">
    <text evidence="1">Belongs to the peptidase S14 family.</text>
</comment>
<sequence>MIPVVIEQTSRGERSYDIYSRLLKDRIIMLTGPVEDNMANSVIAQLLFLDAQDSTKDIYLYVNTPGGSVSAGLAIVDTMNFIKADVQTIVMGMAASMGTVIASSGAKGKRFMLPNAEYMIHQPMGGTGGGTQQTDMAIAAEHLLKTRNTLEKILAENSGQSMEKVHADAERDNWMSAQETLEYGFIDEIMANNSLN</sequence>
<accession>P63788</accession>
<accession>P58279</accession>
<gene>
    <name evidence="1" type="primary">clpP</name>
    <name type="ordered locus">spr0656</name>
</gene>
<organism>
    <name type="scientific">Streptococcus pneumoniae (strain ATCC BAA-255 / R6)</name>
    <dbReference type="NCBI Taxonomy" id="171101"/>
    <lineage>
        <taxon>Bacteria</taxon>
        <taxon>Bacillati</taxon>
        <taxon>Bacillota</taxon>
        <taxon>Bacilli</taxon>
        <taxon>Lactobacillales</taxon>
        <taxon>Streptococcaceae</taxon>
        <taxon>Streptococcus</taxon>
    </lineage>
</organism>